<feature type="chain" id="PRO_0000115540" description="Small ribosomal subunit protein uS15">
    <location>
        <begin position="1"/>
        <end position="89"/>
    </location>
</feature>
<protein>
    <recommendedName>
        <fullName evidence="1">Small ribosomal subunit protein uS15</fullName>
    </recommendedName>
    <alternativeName>
        <fullName evidence="2">30S ribosomal protein S15</fullName>
    </alternativeName>
</protein>
<evidence type="ECO:0000255" key="1">
    <source>
        <dbReference type="HAMAP-Rule" id="MF_01343"/>
    </source>
</evidence>
<evidence type="ECO:0000305" key="2"/>
<comment type="function">
    <text evidence="1">One of the primary rRNA binding proteins, it binds directly to 16S rRNA where it helps nucleate assembly of the platform of the 30S subunit by binding and bridging several RNA helices of the 16S rRNA.</text>
</comment>
<comment type="function">
    <text evidence="1">Forms an intersubunit bridge (bridge B4) with the 23S rRNA of the 50S subunit in the ribosome.</text>
</comment>
<comment type="subunit">
    <text evidence="1">Part of the 30S ribosomal subunit. Forms a bridge to the 50S subunit in the 70S ribosome, contacting the 23S rRNA.</text>
</comment>
<comment type="similarity">
    <text evidence="1">Belongs to the universal ribosomal protein uS15 family.</text>
</comment>
<gene>
    <name evidence="1" type="primary">rpsO</name>
    <name type="ordered locus">SAR1249</name>
</gene>
<dbReference type="EMBL" id="BX571856">
    <property type="protein sequence ID" value="CAG40251.1"/>
    <property type="molecule type" value="Genomic_DNA"/>
</dbReference>
<dbReference type="RefSeq" id="WP_001018328.1">
    <property type="nucleotide sequence ID" value="NC_002952.2"/>
</dbReference>
<dbReference type="SMR" id="Q6GHG2"/>
<dbReference type="KEGG" id="sar:SAR1249"/>
<dbReference type="HOGENOM" id="CLU_148518_0_0_9"/>
<dbReference type="Proteomes" id="UP000000596">
    <property type="component" value="Chromosome"/>
</dbReference>
<dbReference type="GO" id="GO:0022627">
    <property type="term" value="C:cytosolic small ribosomal subunit"/>
    <property type="evidence" value="ECO:0007669"/>
    <property type="project" value="TreeGrafter"/>
</dbReference>
<dbReference type="GO" id="GO:0019843">
    <property type="term" value="F:rRNA binding"/>
    <property type="evidence" value="ECO:0007669"/>
    <property type="project" value="UniProtKB-UniRule"/>
</dbReference>
<dbReference type="GO" id="GO:0003735">
    <property type="term" value="F:structural constituent of ribosome"/>
    <property type="evidence" value="ECO:0007669"/>
    <property type="project" value="InterPro"/>
</dbReference>
<dbReference type="GO" id="GO:0006412">
    <property type="term" value="P:translation"/>
    <property type="evidence" value="ECO:0007669"/>
    <property type="project" value="UniProtKB-UniRule"/>
</dbReference>
<dbReference type="CDD" id="cd00353">
    <property type="entry name" value="Ribosomal_S15p_S13e"/>
    <property type="match status" value="1"/>
</dbReference>
<dbReference type="FunFam" id="1.10.287.10:FF:000002">
    <property type="entry name" value="30S ribosomal protein S15"/>
    <property type="match status" value="1"/>
</dbReference>
<dbReference type="Gene3D" id="6.10.250.3130">
    <property type="match status" value="1"/>
</dbReference>
<dbReference type="Gene3D" id="1.10.287.10">
    <property type="entry name" value="S15/NS1, RNA-binding"/>
    <property type="match status" value="1"/>
</dbReference>
<dbReference type="HAMAP" id="MF_01343_B">
    <property type="entry name" value="Ribosomal_uS15_B"/>
    <property type="match status" value="1"/>
</dbReference>
<dbReference type="InterPro" id="IPR000589">
    <property type="entry name" value="Ribosomal_uS15"/>
</dbReference>
<dbReference type="InterPro" id="IPR005290">
    <property type="entry name" value="Ribosomal_uS15_bac-type"/>
</dbReference>
<dbReference type="InterPro" id="IPR009068">
    <property type="entry name" value="uS15_NS1_RNA-bd_sf"/>
</dbReference>
<dbReference type="NCBIfam" id="TIGR00952">
    <property type="entry name" value="S15_bact"/>
    <property type="match status" value="1"/>
</dbReference>
<dbReference type="PANTHER" id="PTHR23321">
    <property type="entry name" value="RIBOSOMAL PROTEIN S15, BACTERIAL AND ORGANELLAR"/>
    <property type="match status" value="1"/>
</dbReference>
<dbReference type="PANTHER" id="PTHR23321:SF26">
    <property type="entry name" value="SMALL RIBOSOMAL SUBUNIT PROTEIN US15M"/>
    <property type="match status" value="1"/>
</dbReference>
<dbReference type="Pfam" id="PF00312">
    <property type="entry name" value="Ribosomal_S15"/>
    <property type="match status" value="1"/>
</dbReference>
<dbReference type="SMART" id="SM01387">
    <property type="entry name" value="Ribosomal_S15"/>
    <property type="match status" value="1"/>
</dbReference>
<dbReference type="SUPFAM" id="SSF47060">
    <property type="entry name" value="S15/NS1 RNA-binding domain"/>
    <property type="match status" value="1"/>
</dbReference>
<dbReference type="PROSITE" id="PS00362">
    <property type="entry name" value="RIBOSOMAL_S15"/>
    <property type="match status" value="1"/>
</dbReference>
<sequence>MAISQERKNEIIKEYRVHETDTGSPEVQIAVLTAEINAVNEHLRTHKKDHHSRRGLLKMVGRRRHLLNYLRSKDIQRYRELIKSLGIRR</sequence>
<reference key="1">
    <citation type="journal article" date="2004" name="Proc. Natl. Acad. Sci. U.S.A.">
        <title>Complete genomes of two clinical Staphylococcus aureus strains: evidence for the rapid evolution of virulence and drug resistance.</title>
        <authorList>
            <person name="Holden M.T.G."/>
            <person name="Feil E.J."/>
            <person name="Lindsay J.A."/>
            <person name="Peacock S.J."/>
            <person name="Day N.P.J."/>
            <person name="Enright M.C."/>
            <person name="Foster T.J."/>
            <person name="Moore C.E."/>
            <person name="Hurst L."/>
            <person name="Atkin R."/>
            <person name="Barron A."/>
            <person name="Bason N."/>
            <person name="Bentley S.D."/>
            <person name="Chillingworth C."/>
            <person name="Chillingworth T."/>
            <person name="Churcher C."/>
            <person name="Clark L."/>
            <person name="Corton C."/>
            <person name="Cronin A."/>
            <person name="Doggett J."/>
            <person name="Dowd L."/>
            <person name="Feltwell T."/>
            <person name="Hance Z."/>
            <person name="Harris B."/>
            <person name="Hauser H."/>
            <person name="Holroyd S."/>
            <person name="Jagels K."/>
            <person name="James K.D."/>
            <person name="Lennard N."/>
            <person name="Line A."/>
            <person name="Mayes R."/>
            <person name="Moule S."/>
            <person name="Mungall K."/>
            <person name="Ormond D."/>
            <person name="Quail M.A."/>
            <person name="Rabbinowitsch E."/>
            <person name="Rutherford K.M."/>
            <person name="Sanders M."/>
            <person name="Sharp S."/>
            <person name="Simmonds M."/>
            <person name="Stevens K."/>
            <person name="Whitehead S."/>
            <person name="Barrell B.G."/>
            <person name="Spratt B.G."/>
            <person name="Parkhill J."/>
        </authorList>
    </citation>
    <scope>NUCLEOTIDE SEQUENCE [LARGE SCALE GENOMIC DNA]</scope>
    <source>
        <strain>MRSA252</strain>
    </source>
</reference>
<keyword id="KW-0687">Ribonucleoprotein</keyword>
<keyword id="KW-0689">Ribosomal protein</keyword>
<keyword id="KW-0694">RNA-binding</keyword>
<keyword id="KW-0699">rRNA-binding</keyword>
<organism>
    <name type="scientific">Staphylococcus aureus (strain MRSA252)</name>
    <dbReference type="NCBI Taxonomy" id="282458"/>
    <lineage>
        <taxon>Bacteria</taxon>
        <taxon>Bacillati</taxon>
        <taxon>Bacillota</taxon>
        <taxon>Bacilli</taxon>
        <taxon>Bacillales</taxon>
        <taxon>Staphylococcaceae</taxon>
        <taxon>Staphylococcus</taxon>
    </lineage>
</organism>
<accession>Q6GHG2</accession>
<proteinExistence type="inferred from homology"/>
<name>RS15_STAAR</name>